<comment type="function">
    <text evidence="1">Catalyzes the ATP-dependent amidation of deamido-NAD to form NAD. Uses ammonia as a nitrogen source.</text>
</comment>
<comment type="catalytic activity">
    <reaction evidence="1">
        <text>deamido-NAD(+) + NH4(+) + ATP = AMP + diphosphate + NAD(+) + H(+)</text>
        <dbReference type="Rhea" id="RHEA:21188"/>
        <dbReference type="ChEBI" id="CHEBI:15378"/>
        <dbReference type="ChEBI" id="CHEBI:28938"/>
        <dbReference type="ChEBI" id="CHEBI:30616"/>
        <dbReference type="ChEBI" id="CHEBI:33019"/>
        <dbReference type="ChEBI" id="CHEBI:57540"/>
        <dbReference type="ChEBI" id="CHEBI:58437"/>
        <dbReference type="ChEBI" id="CHEBI:456215"/>
        <dbReference type="EC" id="6.3.1.5"/>
    </reaction>
</comment>
<comment type="pathway">
    <text evidence="1">Cofactor biosynthesis; NAD(+) biosynthesis; NAD(+) from deamido-NAD(+) (ammonia route): step 1/1.</text>
</comment>
<comment type="subunit">
    <text evidence="1">Homodimer.</text>
</comment>
<comment type="similarity">
    <text evidence="1">Belongs to the NAD synthetase family.</text>
</comment>
<gene>
    <name evidence="1" type="primary">nadE</name>
    <name type="ordered locus">PSHAa0075</name>
</gene>
<proteinExistence type="inferred from homology"/>
<accession>Q3IF87</accession>
<protein>
    <recommendedName>
        <fullName evidence="1">NH(3)-dependent NAD(+) synthetase</fullName>
        <ecNumber evidence="1">6.3.1.5</ecNumber>
    </recommendedName>
</protein>
<keyword id="KW-0067">ATP-binding</keyword>
<keyword id="KW-0436">Ligase</keyword>
<keyword id="KW-0460">Magnesium</keyword>
<keyword id="KW-0479">Metal-binding</keyword>
<keyword id="KW-0520">NAD</keyword>
<keyword id="KW-0547">Nucleotide-binding</keyword>
<keyword id="KW-1185">Reference proteome</keyword>
<organism>
    <name type="scientific">Pseudoalteromonas translucida (strain TAC 125)</name>
    <dbReference type="NCBI Taxonomy" id="326442"/>
    <lineage>
        <taxon>Bacteria</taxon>
        <taxon>Pseudomonadati</taxon>
        <taxon>Pseudomonadota</taxon>
        <taxon>Gammaproteobacteria</taxon>
        <taxon>Alteromonadales</taxon>
        <taxon>Pseudoalteromonadaceae</taxon>
        <taxon>Pseudoalteromonas</taxon>
    </lineage>
</organism>
<dbReference type="EC" id="6.3.1.5" evidence="1"/>
<dbReference type="EMBL" id="CR954246">
    <property type="protein sequence ID" value="CAI85184.1"/>
    <property type="molecule type" value="Genomic_DNA"/>
</dbReference>
<dbReference type="SMR" id="Q3IF87"/>
<dbReference type="STRING" id="326442.PSHAa0075"/>
<dbReference type="KEGG" id="pha:PSHAa0075"/>
<dbReference type="PATRIC" id="fig|326442.8.peg.74"/>
<dbReference type="eggNOG" id="COG0171">
    <property type="taxonomic scope" value="Bacteria"/>
</dbReference>
<dbReference type="HOGENOM" id="CLU_059327_3_0_6"/>
<dbReference type="BioCyc" id="PHAL326442:PSHA_RS00385-MONOMER"/>
<dbReference type="UniPathway" id="UPA00253">
    <property type="reaction ID" value="UER00333"/>
</dbReference>
<dbReference type="Proteomes" id="UP000006843">
    <property type="component" value="Chromosome I"/>
</dbReference>
<dbReference type="GO" id="GO:0005737">
    <property type="term" value="C:cytoplasm"/>
    <property type="evidence" value="ECO:0007669"/>
    <property type="project" value="InterPro"/>
</dbReference>
<dbReference type="GO" id="GO:0005524">
    <property type="term" value="F:ATP binding"/>
    <property type="evidence" value="ECO:0007669"/>
    <property type="project" value="UniProtKB-UniRule"/>
</dbReference>
<dbReference type="GO" id="GO:0004359">
    <property type="term" value="F:glutaminase activity"/>
    <property type="evidence" value="ECO:0007669"/>
    <property type="project" value="InterPro"/>
</dbReference>
<dbReference type="GO" id="GO:0046872">
    <property type="term" value="F:metal ion binding"/>
    <property type="evidence" value="ECO:0007669"/>
    <property type="project" value="UniProtKB-KW"/>
</dbReference>
<dbReference type="GO" id="GO:0003952">
    <property type="term" value="F:NAD+ synthase (glutamine-hydrolyzing) activity"/>
    <property type="evidence" value="ECO:0007669"/>
    <property type="project" value="InterPro"/>
</dbReference>
<dbReference type="GO" id="GO:0008795">
    <property type="term" value="F:NAD+ synthase activity"/>
    <property type="evidence" value="ECO:0007669"/>
    <property type="project" value="UniProtKB-UniRule"/>
</dbReference>
<dbReference type="GO" id="GO:0009435">
    <property type="term" value="P:NAD biosynthetic process"/>
    <property type="evidence" value="ECO:0007669"/>
    <property type="project" value="UniProtKB-UniRule"/>
</dbReference>
<dbReference type="CDD" id="cd00553">
    <property type="entry name" value="NAD_synthase"/>
    <property type="match status" value="1"/>
</dbReference>
<dbReference type="Gene3D" id="3.40.50.620">
    <property type="entry name" value="HUPs"/>
    <property type="match status" value="1"/>
</dbReference>
<dbReference type="HAMAP" id="MF_00193">
    <property type="entry name" value="NadE_ammonia_dep"/>
    <property type="match status" value="1"/>
</dbReference>
<dbReference type="InterPro" id="IPR022310">
    <property type="entry name" value="NAD/GMP_synthase"/>
</dbReference>
<dbReference type="InterPro" id="IPR003694">
    <property type="entry name" value="NAD_synthase"/>
</dbReference>
<dbReference type="InterPro" id="IPR022926">
    <property type="entry name" value="NH(3)-dep_NAD(+)_synth"/>
</dbReference>
<dbReference type="InterPro" id="IPR014729">
    <property type="entry name" value="Rossmann-like_a/b/a_fold"/>
</dbReference>
<dbReference type="NCBIfam" id="TIGR00552">
    <property type="entry name" value="nadE"/>
    <property type="match status" value="1"/>
</dbReference>
<dbReference type="NCBIfam" id="NF001979">
    <property type="entry name" value="PRK00768.1"/>
    <property type="match status" value="1"/>
</dbReference>
<dbReference type="PANTHER" id="PTHR23090">
    <property type="entry name" value="NH 3 /GLUTAMINE-DEPENDENT NAD + SYNTHETASE"/>
    <property type="match status" value="1"/>
</dbReference>
<dbReference type="PANTHER" id="PTHR23090:SF7">
    <property type="entry name" value="NH(3)-DEPENDENT NAD(+) SYNTHETASE"/>
    <property type="match status" value="1"/>
</dbReference>
<dbReference type="Pfam" id="PF02540">
    <property type="entry name" value="NAD_synthase"/>
    <property type="match status" value="1"/>
</dbReference>
<dbReference type="SUPFAM" id="SSF52402">
    <property type="entry name" value="Adenine nucleotide alpha hydrolases-like"/>
    <property type="match status" value="1"/>
</dbReference>
<feature type="chain" id="PRO_1000077584" description="NH(3)-dependent NAD(+) synthetase">
    <location>
        <begin position="1"/>
        <end position="278"/>
    </location>
</feature>
<feature type="binding site" evidence="1">
    <location>
        <begin position="43"/>
        <end position="50"/>
    </location>
    <ligand>
        <name>ATP</name>
        <dbReference type="ChEBI" id="CHEBI:30616"/>
    </ligand>
</feature>
<feature type="binding site" evidence="1">
    <location>
        <position position="49"/>
    </location>
    <ligand>
        <name>Mg(2+)</name>
        <dbReference type="ChEBI" id="CHEBI:18420"/>
    </ligand>
</feature>
<feature type="binding site" evidence="1">
    <location>
        <position position="146"/>
    </location>
    <ligand>
        <name>deamido-NAD(+)</name>
        <dbReference type="ChEBI" id="CHEBI:58437"/>
    </ligand>
</feature>
<feature type="binding site" evidence="1">
    <location>
        <position position="166"/>
    </location>
    <ligand>
        <name>ATP</name>
        <dbReference type="ChEBI" id="CHEBI:30616"/>
    </ligand>
</feature>
<feature type="binding site" evidence="1">
    <location>
        <position position="171"/>
    </location>
    <ligand>
        <name>Mg(2+)</name>
        <dbReference type="ChEBI" id="CHEBI:18420"/>
    </ligand>
</feature>
<feature type="binding site" evidence="1">
    <location>
        <position position="179"/>
    </location>
    <ligand>
        <name>deamido-NAD(+)</name>
        <dbReference type="ChEBI" id="CHEBI:58437"/>
    </ligand>
</feature>
<feature type="binding site" evidence="1">
    <location>
        <position position="186"/>
    </location>
    <ligand>
        <name>deamido-NAD(+)</name>
        <dbReference type="ChEBI" id="CHEBI:58437"/>
    </ligand>
</feature>
<feature type="binding site" evidence="1">
    <location>
        <position position="195"/>
    </location>
    <ligand>
        <name>ATP</name>
        <dbReference type="ChEBI" id="CHEBI:30616"/>
    </ligand>
</feature>
<feature type="binding site" evidence="1">
    <location>
        <position position="217"/>
    </location>
    <ligand>
        <name>ATP</name>
        <dbReference type="ChEBI" id="CHEBI:30616"/>
    </ligand>
</feature>
<feature type="binding site" evidence="1">
    <location>
        <begin position="266"/>
        <end position="267"/>
    </location>
    <ligand>
        <name>deamido-NAD(+)</name>
        <dbReference type="ChEBI" id="CHEBI:58437"/>
    </ligand>
</feature>
<sequence length="278" mass="30258">MRAEIMAAMKVQPVIDVNAEISRRVNFIKARLIAAHATSLVLGISGGVDSSVCGRLCQLAVNELNQEQSTTDYKFVAVRLPYGVQADENEAQLAVDFIQPSSRMTVNIKPATDALHEQTMAAIVGNGESLPEQEKIDFIKGNVKARQRMIAQYEIAAFCQGLVVGTDHSAENITGFYTKFGDGACDLAPLFGLSKRQVRALGSTLGASSVLVNKAPTADLESDRPGLTDEEALGLSYEQIDDFLEGKPVTQQVEQTLSAIYQRTQHKRQPVPTIYDEL</sequence>
<reference key="1">
    <citation type="journal article" date="2005" name="Genome Res.">
        <title>Coping with cold: the genome of the versatile marine Antarctica bacterium Pseudoalteromonas haloplanktis TAC125.</title>
        <authorList>
            <person name="Medigue C."/>
            <person name="Krin E."/>
            <person name="Pascal G."/>
            <person name="Barbe V."/>
            <person name="Bernsel A."/>
            <person name="Bertin P.N."/>
            <person name="Cheung F."/>
            <person name="Cruveiller S."/>
            <person name="D'Amico S."/>
            <person name="Duilio A."/>
            <person name="Fang G."/>
            <person name="Feller G."/>
            <person name="Ho C."/>
            <person name="Mangenot S."/>
            <person name="Marino G."/>
            <person name="Nilsson J."/>
            <person name="Parrilli E."/>
            <person name="Rocha E.P.C."/>
            <person name="Rouy Z."/>
            <person name="Sekowska A."/>
            <person name="Tutino M.L."/>
            <person name="Vallenet D."/>
            <person name="von Heijne G."/>
            <person name="Danchin A."/>
        </authorList>
    </citation>
    <scope>NUCLEOTIDE SEQUENCE [LARGE SCALE GENOMIC DNA]</scope>
    <source>
        <strain>TAC 125</strain>
    </source>
</reference>
<evidence type="ECO:0000255" key="1">
    <source>
        <dbReference type="HAMAP-Rule" id="MF_00193"/>
    </source>
</evidence>
<name>NADE_PSET1</name>